<keyword id="KW-0539">Nucleus</keyword>
<keyword id="KW-0597">Phosphoprotein</keyword>
<keyword id="KW-1185">Reference proteome</keyword>
<keyword id="KW-0677">Repeat</keyword>
<keyword id="KW-0687">Ribonucleoprotein</keyword>
<keyword id="KW-0690">Ribosome biogenesis</keyword>
<keyword id="KW-0698">rRNA processing</keyword>
<sequence>MAGNKRKRSNASEGSDSQGNERISSLSANEATQDFPRGGASSLTPLEYKEAVLEAKKDFMESASGTAELSKKTRPKKKGSKKSSKSELDNEENLKVHIQSLRYKNITPGSLILGQIAQINTLDLAVSLPNCLTGYVPITNISDKLSDRLDSIDNHAEDNAATEEEDGLNQIPDLMDLYKVGQWVRVSVTALGSENTTKTGKRHIELSLKPQDANGSAPEAADFVAGSMIQAVVSSIEDHGIVFDIGINNYTGFLSKKHINDFPFVEGQSLLCSVISKEDRIFHLSLTATSTKALEVMPSVQAILPGDYINVLVTDIKESGVIAKYMGVVDVTSDIYHSSPVKGEDLEDKFQLAKSVPARVLFVIPGDPPKIAVSFLPHVLTFNFATPNTPHPDQLDIGFIVNAAKVTYVSSSLGVFCDVGVPEISGFAHISRLSDKKVAGISPNSGPYKVDSTHEARIINYSYVDNLYILSFQQSVLNQQFLRIEDIEVGQFVDGTIAKLIPQGIVVTISEGINGLVPSTHMADIALQFPERRFKVGSSVKCRVLSTNVLRKRVLLTLKKSLLNTDLPLIYDYEQATPGTQTVGTLARIFEDGAIVEFYNSVRAFLPVSEMSEAYIRDAREHFKVGQTLSVTIVSCDPENRKMRVGCREQSWDAKRLERFENIKAGSVLSGIVLQKTEDSVIVDLGDKVTGVITLGQLCDGDLNKCSKVMNKLRASTKLAEVLVLRKDTSKKLISLSLKKSLVEAAKENRMPINITDLKEGIKYFGFVRNATTFGVFVEFCDGLVALVPKAYISEEYVPVPSAVYKPQQSVTCVCLSVELSQEKAFMSFKPLAQKQEKAVEFMESKYDIDNPVDETIKKTYDYVAGKITWAVVTSAKASQLNVDLAANVHGRVDVSEVFDNFGEIVDPNKPLKRFHKGDKIRVRVLGIHDSRNHKFLPISHRVSPKQFLELSVRPSILNMEPFSMKEPQFKKGDEVTGFVNNVSKECVWVSLTPSVNGRIPILDLTTDVKELNSLQKHFFLGKAIKCYVVNAEDSITLSAIGPLQGFENLTPGSRLVGKVTNVNEAGAILQLPGHMSGRVSRIDMFDDYDILPETKFTRNNLVGVCVLSVDVPNRKVALSARNSRTQSQPVEIKDKEINSVDDLKIGDICRGFVCNVANQGLFVTIGHNLIARVKIGELFDTFIKDWKPHFHVNQLVKGSIVGIDNDSKRIEMSLKQSKIKDSSEITKTFADIAVGSNLDGTVVKVGDYGVLIRIDGTDNIVGLCHKSEIADAVVLNISKLYSSGDKVRAHVLDVDSEKRRIALGLKSSYFDSDSDISMSDNEEDVEMRSEDQSDTSESEVGSKDDVQSEEVENLESAGDEDEEEEPSALQANGFDWTDGSTVFDKLADDTEDSEDEEDEEPKRKKSKSDRFDDEEKDLDEIPSTAADFERQLLSSPNSSLLWISYMAYHLNLNELQEAREVGKRALSTINYREEDEKLNVWMALLNLEVAYGTEDSLKEVFKEACAYCDALIVYEKLCGILIKGGKVDLADEYMQLMLKNFKQVPSVWIQYATFLLNNDKAEKAHGLLERSLQSLPKSEHVGIIEKFAILEFKNGDPERGRTIFEGLLSSYPKRLDLWNVLIDMEMKQDDPSIVRRLFQRLLALNLSTKKAKFAFKKWLAYEKNIGDDEGAEQVKRRAIEYVSESHSEN</sequence>
<accession>O74835</accession>
<proteinExistence type="evidence at protein level"/>
<feature type="chain" id="PRO_0000314629" description="rRNA biogenesis protein rrp5">
    <location>
        <begin position="1"/>
        <end position="1690"/>
    </location>
</feature>
<feature type="domain" description="S1 motif 1" evidence="3">
    <location>
        <begin position="109"/>
        <end position="209"/>
    </location>
</feature>
<feature type="domain" description="S1 motif 2" evidence="3">
    <location>
        <begin position="226"/>
        <end position="289"/>
    </location>
</feature>
<feature type="domain" description="S1 motif 3" evidence="3">
    <location>
        <begin position="306"/>
        <end position="376"/>
    </location>
</feature>
<feature type="domain" description="S1 motif 4" evidence="3">
    <location>
        <begin position="398"/>
        <end position="473"/>
    </location>
</feature>
<feature type="domain" description="S1 motif 5" evidence="3">
    <location>
        <begin position="490"/>
        <end position="559"/>
    </location>
</feature>
<feature type="domain" description="S1 motif 6" evidence="3">
    <location>
        <begin position="579"/>
        <end position="648"/>
    </location>
</feature>
<feature type="domain" description="S1 motif 7" evidence="3">
    <location>
        <begin position="666"/>
        <end position="739"/>
    </location>
</feature>
<feature type="domain" description="S1 motif 8" evidence="3">
    <location>
        <begin position="761"/>
        <end position="830"/>
    </location>
</feature>
<feature type="domain" description="S1 motif 9" evidence="3">
    <location>
        <begin position="866"/>
        <end position="942"/>
    </location>
</feature>
<feature type="domain" description="S1 motif 10" evidence="3">
    <location>
        <begin position="973"/>
        <end position="1044"/>
    </location>
</feature>
<feature type="domain" description="S1 motif 11" evidence="3">
    <location>
        <begin position="1053"/>
        <end position="1122"/>
    </location>
</feature>
<feature type="domain" description="S1 motif 12" evidence="3">
    <location>
        <begin position="1147"/>
        <end position="1216"/>
    </location>
</feature>
<feature type="domain" description="S1 motif 13" evidence="3">
    <location>
        <begin position="1236"/>
        <end position="1307"/>
    </location>
</feature>
<feature type="repeat" description="HAT 1" evidence="2">
    <location>
        <begin position="1420"/>
        <end position="1452"/>
    </location>
</feature>
<feature type="repeat" description="HAT 2" evidence="2">
    <location>
        <begin position="1526"/>
        <end position="1558"/>
    </location>
</feature>
<feature type="repeat" description="HAT 3" evidence="2">
    <location>
        <begin position="1596"/>
        <end position="1628"/>
    </location>
</feature>
<feature type="region of interest" description="Disordered" evidence="4">
    <location>
        <begin position="1"/>
        <end position="42"/>
    </location>
</feature>
<feature type="region of interest" description="Disordered" evidence="4">
    <location>
        <begin position="59"/>
        <end position="90"/>
    </location>
</feature>
<feature type="region of interest" description="Disordered" evidence="4">
    <location>
        <begin position="1313"/>
        <end position="1424"/>
    </location>
</feature>
<feature type="compositionally biased region" description="Polar residues" evidence="4">
    <location>
        <begin position="11"/>
        <end position="32"/>
    </location>
</feature>
<feature type="compositionally biased region" description="Basic residues" evidence="4">
    <location>
        <begin position="72"/>
        <end position="83"/>
    </location>
</feature>
<feature type="compositionally biased region" description="Acidic residues" evidence="4">
    <location>
        <begin position="1348"/>
        <end position="1367"/>
    </location>
</feature>
<feature type="compositionally biased region" description="Acidic residues" evidence="4">
    <location>
        <begin position="1390"/>
        <end position="1400"/>
    </location>
</feature>
<feature type="compositionally biased region" description="Acidic residues" evidence="4">
    <location>
        <begin position="1412"/>
        <end position="1421"/>
    </location>
</feature>
<feature type="modified residue" description="Phosphothreonine" evidence="6">
    <location>
        <position position="1391"/>
    </location>
</feature>
<feature type="modified residue" description="Phosphoserine" evidence="6">
    <location>
        <position position="1394"/>
    </location>
</feature>
<feature type="modified residue" description="Phosphoserine" evidence="6">
    <location>
        <position position="1684"/>
    </location>
</feature>
<feature type="modified residue" description="Phosphoserine" evidence="6">
    <location>
        <position position="1686"/>
    </location>
</feature>
<protein>
    <recommendedName>
        <fullName>rRNA biogenesis protein rrp5</fullName>
    </recommendedName>
    <alternativeName>
        <fullName>Ribosomal RNA-processing protein 5</fullName>
    </alternativeName>
    <alternativeName>
        <fullName>U3 small nucleolar RNA-associated protein rrp5</fullName>
        <shortName>U3 snoRNA-associated protein rrp5</shortName>
    </alternativeName>
</protein>
<gene>
    <name evidence="1" type="primary">rrp5</name>
    <name type="ORF">SPCC1183.07</name>
</gene>
<evidence type="ECO:0000250" key="1">
    <source>
        <dbReference type="UniProtKB" id="Q05022"/>
    </source>
</evidence>
<evidence type="ECO:0000255" key="2"/>
<evidence type="ECO:0000255" key="3">
    <source>
        <dbReference type="PROSITE-ProRule" id="PRU00180"/>
    </source>
</evidence>
<evidence type="ECO:0000256" key="4">
    <source>
        <dbReference type="SAM" id="MobiDB-lite"/>
    </source>
</evidence>
<evidence type="ECO:0000269" key="5">
    <source>
    </source>
</evidence>
<evidence type="ECO:0000269" key="6">
    <source>
    </source>
</evidence>
<evidence type="ECO:0000305" key="7"/>
<evidence type="ECO:0000312" key="8">
    <source>
        <dbReference type="EMBL" id="CAA21087.1"/>
    </source>
</evidence>
<comment type="function">
    <text evidence="1">Involved in the biogenesis of rRNA. Required for the formation of 18S and 5.8S rRNA (By similarity).</text>
</comment>
<comment type="subunit">
    <text evidence="1">Component of the ribosomal small subunit (SSU) processome.</text>
</comment>
<comment type="subcellular location">
    <subcellularLocation>
        <location evidence="5">Nucleus</location>
        <location evidence="5">Nucleolus</location>
    </subcellularLocation>
</comment>
<organism>
    <name type="scientific">Schizosaccharomyces pombe (strain 972 / ATCC 24843)</name>
    <name type="common">Fission yeast</name>
    <dbReference type="NCBI Taxonomy" id="284812"/>
    <lineage>
        <taxon>Eukaryota</taxon>
        <taxon>Fungi</taxon>
        <taxon>Dikarya</taxon>
        <taxon>Ascomycota</taxon>
        <taxon>Taphrinomycotina</taxon>
        <taxon>Schizosaccharomycetes</taxon>
        <taxon>Schizosaccharomycetales</taxon>
        <taxon>Schizosaccharomycetaceae</taxon>
        <taxon>Schizosaccharomyces</taxon>
    </lineage>
</organism>
<name>RRP5_SCHPO</name>
<reference evidence="8" key="1">
    <citation type="journal article" date="2002" name="Nature">
        <title>The genome sequence of Schizosaccharomyces pombe.</title>
        <authorList>
            <person name="Wood V."/>
            <person name="Gwilliam R."/>
            <person name="Rajandream M.A."/>
            <person name="Lyne M.H."/>
            <person name="Lyne R."/>
            <person name="Stewart A."/>
            <person name="Sgouros J.G."/>
            <person name="Peat N."/>
            <person name="Hayles J."/>
            <person name="Baker S.G."/>
            <person name="Basham D."/>
            <person name="Bowman S."/>
            <person name="Brooks K."/>
            <person name="Brown D."/>
            <person name="Brown S."/>
            <person name="Chillingworth T."/>
            <person name="Churcher C.M."/>
            <person name="Collins M."/>
            <person name="Connor R."/>
            <person name="Cronin A."/>
            <person name="Davis P."/>
            <person name="Feltwell T."/>
            <person name="Fraser A."/>
            <person name="Gentles S."/>
            <person name="Goble A."/>
            <person name="Hamlin N."/>
            <person name="Harris D.E."/>
            <person name="Hidalgo J."/>
            <person name="Hodgson G."/>
            <person name="Holroyd S."/>
            <person name="Hornsby T."/>
            <person name="Howarth S."/>
            <person name="Huckle E.J."/>
            <person name="Hunt S."/>
            <person name="Jagels K."/>
            <person name="James K.D."/>
            <person name="Jones L."/>
            <person name="Jones M."/>
            <person name="Leather S."/>
            <person name="McDonald S."/>
            <person name="McLean J."/>
            <person name="Mooney P."/>
            <person name="Moule S."/>
            <person name="Mungall K.L."/>
            <person name="Murphy L.D."/>
            <person name="Niblett D."/>
            <person name="Odell C."/>
            <person name="Oliver K."/>
            <person name="O'Neil S."/>
            <person name="Pearson D."/>
            <person name="Quail M.A."/>
            <person name="Rabbinowitsch E."/>
            <person name="Rutherford K.M."/>
            <person name="Rutter S."/>
            <person name="Saunders D."/>
            <person name="Seeger K."/>
            <person name="Sharp S."/>
            <person name="Skelton J."/>
            <person name="Simmonds M.N."/>
            <person name="Squares R."/>
            <person name="Squares S."/>
            <person name="Stevens K."/>
            <person name="Taylor K."/>
            <person name="Taylor R.G."/>
            <person name="Tivey A."/>
            <person name="Walsh S.V."/>
            <person name="Warren T."/>
            <person name="Whitehead S."/>
            <person name="Woodward J.R."/>
            <person name="Volckaert G."/>
            <person name="Aert R."/>
            <person name="Robben J."/>
            <person name="Grymonprez B."/>
            <person name="Weltjens I."/>
            <person name="Vanstreels E."/>
            <person name="Rieger M."/>
            <person name="Schaefer M."/>
            <person name="Mueller-Auer S."/>
            <person name="Gabel C."/>
            <person name="Fuchs M."/>
            <person name="Duesterhoeft A."/>
            <person name="Fritzc C."/>
            <person name="Holzer E."/>
            <person name="Moestl D."/>
            <person name="Hilbert H."/>
            <person name="Borzym K."/>
            <person name="Langer I."/>
            <person name="Beck A."/>
            <person name="Lehrach H."/>
            <person name="Reinhardt R."/>
            <person name="Pohl T.M."/>
            <person name="Eger P."/>
            <person name="Zimmermann W."/>
            <person name="Wedler H."/>
            <person name="Wambutt R."/>
            <person name="Purnelle B."/>
            <person name="Goffeau A."/>
            <person name="Cadieu E."/>
            <person name="Dreano S."/>
            <person name="Gloux S."/>
            <person name="Lelaure V."/>
            <person name="Mottier S."/>
            <person name="Galibert F."/>
            <person name="Aves S.J."/>
            <person name="Xiang Z."/>
            <person name="Hunt C."/>
            <person name="Moore K."/>
            <person name="Hurst S.M."/>
            <person name="Lucas M."/>
            <person name="Rochet M."/>
            <person name="Gaillardin C."/>
            <person name="Tallada V.A."/>
            <person name="Garzon A."/>
            <person name="Thode G."/>
            <person name="Daga R.R."/>
            <person name="Cruzado L."/>
            <person name="Jimenez J."/>
            <person name="Sanchez M."/>
            <person name="del Rey F."/>
            <person name="Benito J."/>
            <person name="Dominguez A."/>
            <person name="Revuelta J.L."/>
            <person name="Moreno S."/>
            <person name="Armstrong J."/>
            <person name="Forsburg S.L."/>
            <person name="Cerutti L."/>
            <person name="Lowe T."/>
            <person name="McCombie W.R."/>
            <person name="Paulsen I."/>
            <person name="Potashkin J."/>
            <person name="Shpakovski G.V."/>
            <person name="Ussery D."/>
            <person name="Barrell B.G."/>
            <person name="Nurse P."/>
        </authorList>
    </citation>
    <scope>NUCLEOTIDE SEQUENCE [LARGE SCALE GENOMIC DNA]</scope>
    <source>
        <strain>972 / ATCC 24843</strain>
    </source>
</reference>
<reference evidence="7" key="2">
    <citation type="journal article" date="2006" name="Nat. Biotechnol.">
        <title>ORFeome cloning and global analysis of protein localization in the fission yeast Schizosaccharomyces pombe.</title>
        <authorList>
            <person name="Matsuyama A."/>
            <person name="Arai R."/>
            <person name="Yashiroda Y."/>
            <person name="Shirai A."/>
            <person name="Kamata A."/>
            <person name="Sekido S."/>
            <person name="Kobayashi Y."/>
            <person name="Hashimoto A."/>
            <person name="Hamamoto M."/>
            <person name="Hiraoka Y."/>
            <person name="Horinouchi S."/>
            <person name="Yoshida M."/>
        </authorList>
    </citation>
    <scope>SUBCELLULAR LOCATION [LARGE SCALE ANALYSIS]</scope>
</reference>
<reference key="3">
    <citation type="journal article" date="2008" name="J. Proteome Res.">
        <title>Phosphoproteome analysis of fission yeast.</title>
        <authorList>
            <person name="Wilson-Grady J.T."/>
            <person name="Villen J."/>
            <person name="Gygi S.P."/>
        </authorList>
    </citation>
    <scope>PHOSPHORYLATION [LARGE SCALE ANALYSIS] AT THR-1391; SER-1394; SER-1684 AND SER-1686</scope>
    <scope>IDENTIFICATION BY MASS SPECTROMETRY</scope>
</reference>
<dbReference type="EMBL" id="CU329672">
    <property type="protein sequence ID" value="CAA21087.1"/>
    <property type="molecule type" value="Genomic_DNA"/>
</dbReference>
<dbReference type="PIR" id="T40847">
    <property type="entry name" value="T40847"/>
</dbReference>
<dbReference type="RefSeq" id="NP_587890.1">
    <property type="nucleotide sequence ID" value="NM_001022882.2"/>
</dbReference>
<dbReference type="SMR" id="O74835"/>
<dbReference type="BioGRID" id="275475">
    <property type="interactions" value="14"/>
</dbReference>
<dbReference type="FunCoup" id="O74835">
    <property type="interactions" value="655"/>
</dbReference>
<dbReference type="IntAct" id="O74835">
    <property type="interactions" value="1"/>
</dbReference>
<dbReference type="STRING" id="284812.O74835"/>
<dbReference type="iPTMnet" id="O74835"/>
<dbReference type="PaxDb" id="4896-SPCC1183.07.1"/>
<dbReference type="EnsemblFungi" id="SPCC1183.07.1">
    <property type="protein sequence ID" value="SPCC1183.07.1:pep"/>
    <property type="gene ID" value="SPCC1183.07"/>
</dbReference>
<dbReference type="GeneID" id="2538897"/>
<dbReference type="KEGG" id="spo:2538897"/>
<dbReference type="PomBase" id="SPCC1183.07">
    <property type="gene designation" value="rrp5"/>
</dbReference>
<dbReference type="VEuPathDB" id="FungiDB:SPCC1183.07"/>
<dbReference type="eggNOG" id="KOG1070">
    <property type="taxonomic scope" value="Eukaryota"/>
</dbReference>
<dbReference type="HOGENOM" id="CLU_000845_0_0_1"/>
<dbReference type="InParanoid" id="O74835"/>
<dbReference type="OMA" id="GQYLRAY"/>
<dbReference type="PhylomeDB" id="O74835"/>
<dbReference type="Reactome" id="R-SPO-6791226">
    <property type="pathway name" value="Major pathway of rRNA processing in the nucleolus and cytosol"/>
</dbReference>
<dbReference type="PRO" id="PR:O74835"/>
<dbReference type="Proteomes" id="UP000002485">
    <property type="component" value="Chromosome III"/>
</dbReference>
<dbReference type="GO" id="GO:0005730">
    <property type="term" value="C:nucleolus"/>
    <property type="evidence" value="ECO:0007005"/>
    <property type="project" value="PomBase"/>
</dbReference>
<dbReference type="GO" id="GO:0032040">
    <property type="term" value="C:small-subunit processome"/>
    <property type="evidence" value="ECO:0000318"/>
    <property type="project" value="GO_Central"/>
</dbReference>
<dbReference type="GO" id="GO:0003723">
    <property type="term" value="F:RNA binding"/>
    <property type="evidence" value="ECO:0000318"/>
    <property type="project" value="GO_Central"/>
</dbReference>
<dbReference type="GO" id="GO:0042134">
    <property type="term" value="F:rRNA primary transcript binding"/>
    <property type="evidence" value="ECO:0000266"/>
    <property type="project" value="PomBase"/>
</dbReference>
<dbReference type="GO" id="GO:0030515">
    <property type="term" value="F:snoRNA binding"/>
    <property type="evidence" value="ECO:0000266"/>
    <property type="project" value="PomBase"/>
</dbReference>
<dbReference type="GO" id="GO:0006364">
    <property type="term" value="P:rRNA processing"/>
    <property type="evidence" value="ECO:0000266"/>
    <property type="project" value="PomBase"/>
</dbReference>
<dbReference type="CDD" id="cd05702">
    <property type="entry name" value="S1_Rrp5_repeat_hs11_sc8"/>
    <property type="match status" value="1"/>
</dbReference>
<dbReference type="CDD" id="cd05703">
    <property type="entry name" value="S1_Rrp5_repeat_hs12_sc9"/>
    <property type="match status" value="1"/>
</dbReference>
<dbReference type="CDD" id="cd05693">
    <property type="entry name" value="S1_Rrp5_repeat_hs1_sc1"/>
    <property type="match status" value="1"/>
</dbReference>
<dbReference type="CDD" id="cd05694">
    <property type="entry name" value="S1_Rrp5_repeat_hs2_sc2"/>
    <property type="match status" value="1"/>
</dbReference>
<dbReference type="CDD" id="cd05697">
    <property type="entry name" value="S1_Rrp5_repeat_hs5"/>
    <property type="match status" value="1"/>
</dbReference>
<dbReference type="CDD" id="cd05698">
    <property type="entry name" value="S1_Rrp5_repeat_hs6_sc5"/>
    <property type="match status" value="1"/>
</dbReference>
<dbReference type="CDD" id="cd04461">
    <property type="entry name" value="S1_Rrp5_repeat_hs8_sc7"/>
    <property type="match status" value="1"/>
</dbReference>
<dbReference type="CDD" id="cd05706">
    <property type="entry name" value="S1_Rrp5_repeat_sc10"/>
    <property type="match status" value="1"/>
</dbReference>
<dbReference type="CDD" id="cd05707">
    <property type="entry name" value="S1_Rrp5_repeat_sc11"/>
    <property type="match status" value="1"/>
</dbReference>
<dbReference type="CDD" id="cd05708">
    <property type="entry name" value="S1_Rrp5_repeat_sc12"/>
    <property type="match status" value="1"/>
</dbReference>
<dbReference type="FunFam" id="1.25.40.10:FF:000065">
    <property type="entry name" value="Programmed cell death 11"/>
    <property type="match status" value="1"/>
</dbReference>
<dbReference type="FunFam" id="2.40.50.140:FF:000103">
    <property type="entry name" value="protein RRP5 homolog"/>
    <property type="match status" value="5"/>
</dbReference>
<dbReference type="FunFam" id="2.40.50.140:FF:000155">
    <property type="entry name" value="rRNA biogenesis protein RRP5"/>
    <property type="match status" value="1"/>
</dbReference>
<dbReference type="FunFam" id="2.40.50.140:FF:000196">
    <property type="entry name" value="rRNA biogenesis protein RRP5"/>
    <property type="match status" value="1"/>
</dbReference>
<dbReference type="FunFam" id="2.40.50.140:FF:000266">
    <property type="entry name" value="rRNA biogenesis protein rrp5"/>
    <property type="match status" value="1"/>
</dbReference>
<dbReference type="FunFam" id="2.40.50.140:FF:000279">
    <property type="entry name" value="rRNA biogenesis protein rrp5"/>
    <property type="match status" value="1"/>
</dbReference>
<dbReference type="Gene3D" id="2.40.50.140">
    <property type="entry name" value="Nucleic acid-binding proteins"/>
    <property type="match status" value="11"/>
</dbReference>
<dbReference type="Gene3D" id="1.25.40.10">
    <property type="entry name" value="Tetratricopeptide repeat domain"/>
    <property type="match status" value="1"/>
</dbReference>
<dbReference type="InterPro" id="IPR003107">
    <property type="entry name" value="HAT"/>
</dbReference>
<dbReference type="InterPro" id="IPR012340">
    <property type="entry name" value="NA-bd_OB-fold"/>
</dbReference>
<dbReference type="InterPro" id="IPR045209">
    <property type="entry name" value="Rrp5"/>
</dbReference>
<dbReference type="InterPro" id="IPR048058">
    <property type="entry name" value="Rrp5_S1_rpt_hs11_sc8"/>
</dbReference>
<dbReference type="InterPro" id="IPR048059">
    <property type="entry name" value="Rrp5_S1_rpt_hs1_sc1"/>
</dbReference>
<dbReference type="InterPro" id="IPR003029">
    <property type="entry name" value="S1_domain"/>
</dbReference>
<dbReference type="InterPro" id="IPR011990">
    <property type="entry name" value="TPR-like_helical_dom_sf"/>
</dbReference>
<dbReference type="PANTHER" id="PTHR23270">
    <property type="entry name" value="PROGRAMMED CELL DEATH PROTEIN 11 PRE-RRNA PROCESSING PROTEIN RRP5"/>
    <property type="match status" value="1"/>
</dbReference>
<dbReference type="PANTHER" id="PTHR23270:SF10">
    <property type="entry name" value="PROTEIN RRP5 HOMOLOG"/>
    <property type="match status" value="1"/>
</dbReference>
<dbReference type="Pfam" id="PF00575">
    <property type="entry name" value="S1"/>
    <property type="match status" value="2"/>
</dbReference>
<dbReference type="Pfam" id="PF23459">
    <property type="entry name" value="S1_RRP5"/>
    <property type="match status" value="3"/>
</dbReference>
<dbReference type="SMART" id="SM00386">
    <property type="entry name" value="HAT"/>
    <property type="match status" value="6"/>
</dbReference>
<dbReference type="SMART" id="SM00316">
    <property type="entry name" value="S1"/>
    <property type="match status" value="13"/>
</dbReference>
<dbReference type="SUPFAM" id="SSF50249">
    <property type="entry name" value="Nucleic acid-binding proteins"/>
    <property type="match status" value="12"/>
</dbReference>
<dbReference type="SUPFAM" id="SSF48452">
    <property type="entry name" value="TPR-like"/>
    <property type="match status" value="1"/>
</dbReference>
<dbReference type="PROSITE" id="PS50126">
    <property type="entry name" value="S1"/>
    <property type="match status" value="12"/>
</dbReference>